<organism evidence="3">
    <name type="scientific">Bacteroides stercoris</name>
    <dbReference type="NCBI Taxonomy" id="46506"/>
    <lineage>
        <taxon>Bacteria</taxon>
        <taxon>Pseudomonadati</taxon>
        <taxon>Bacteroidota</taxon>
        <taxon>Bacteroidia</taxon>
        <taxon>Bacteroidales</taxon>
        <taxon>Bacteroidaceae</taxon>
        <taxon>Bacteroides</taxon>
    </lineage>
</organism>
<feature type="chain" id="PRO_0000083951" description="Heparin lyase">
    <location>
        <begin position="1" status="less than"/>
        <end position="12" status="greater than"/>
    </location>
</feature>
<feature type="non-terminal residue" evidence="3">
    <location>
        <position position="1"/>
    </location>
</feature>
<feature type="non-terminal residue" evidence="3">
    <location>
        <position position="12"/>
    </location>
</feature>
<keyword id="KW-0903">Direct protein sequencing</keyword>
<keyword id="KW-0358">Heparin-binding</keyword>
<keyword id="KW-0456">Lyase</keyword>
<name>HEP1_BACSE</name>
<accession>P83054</accession>
<comment type="function">
    <text evidence="1">Degrades heparin and heparan sulfate.</text>
</comment>
<comment type="catalytic activity">
    <reaction>
        <text>Eliminative cleavage of polysaccharides containing (1-&gt;4)-linked D-glucuronate or L-iduronate residues and (1-&gt;4)-alpha-linked 2-sulfoamino-2-deoxy-6-sulfo-D-glucose residues to give oligosaccharides with terminal 4-deoxy-alpha-D-gluc-4-enuronosyl groups at their non-reducing ends.</text>
        <dbReference type="EC" id="4.2.2.7"/>
    </reaction>
</comment>
<comment type="activity regulation">
    <text>Inhibited by Cu(2+) ion, lead and some agents that modify histidine and cysteine residues. Activated by KCl and by reducing agents, such as dithiothreitol and 2-mercaptoethanol.</text>
</comment>
<comment type="biophysicochemical properties">
    <phDependence>
        <text>Optimum pH is 7.2.</text>
    </phDependence>
    <temperatureDependence>
        <text>Optimum temperature is 45 degrees Celsius.</text>
    </temperatureDependence>
</comment>
<comment type="PTM">
    <text evidence="2">The N-terminus is blocked.</text>
</comment>
<proteinExistence type="evidence at protein level"/>
<evidence type="ECO:0000250" key="1">
    <source>
        <dbReference type="UniProtKB" id="Q05819"/>
    </source>
</evidence>
<evidence type="ECO:0000269" key="2">
    <source>
    </source>
</evidence>
<evidence type="ECO:0000305" key="3"/>
<protein>
    <recommendedName>
        <fullName>Heparin lyase</fullName>
        <ecNumber>4.2.2.7</ecNumber>
    </recommendedName>
    <alternativeName>
        <fullName>Heparin eliminase</fullName>
        <shortName>Heparinase</shortName>
    </alternativeName>
</protein>
<dbReference type="EC" id="4.2.2.7"/>
<dbReference type="GO" id="GO:0008201">
    <property type="term" value="F:heparin binding"/>
    <property type="evidence" value="ECO:0007669"/>
    <property type="project" value="UniProtKB-KW"/>
</dbReference>
<dbReference type="GO" id="GO:0047488">
    <property type="term" value="F:heparin lyase activity"/>
    <property type="evidence" value="ECO:0007669"/>
    <property type="project" value="UniProtKB-EC"/>
</dbReference>
<sequence length="12" mass="1381">MADEALQHTFFA</sequence>
<reference evidence="3" key="1">
    <citation type="journal article" date="2000" name="J. Biochem.">
        <title>Purification and characterization of a novel heparinase from Bacteroides stercoris HJ-15.</title>
        <authorList>
            <person name="Kim B.-T."/>
            <person name="Kim W.-S."/>
            <person name="Kim Y.S."/>
            <person name="Linhardt R.J."/>
            <person name="Kim D.-H."/>
        </authorList>
    </citation>
    <scope>PROTEIN SEQUENCE</scope>
    <source>
        <strain>HJ-15</strain>
    </source>
</reference>